<dbReference type="EC" id="2.7.1.130" evidence="1"/>
<dbReference type="EMBL" id="BX640430">
    <property type="protein sequence ID" value="CAE37857.1"/>
    <property type="molecule type" value="Genomic_DNA"/>
</dbReference>
<dbReference type="RefSeq" id="WP_003812892.1">
    <property type="nucleotide sequence ID" value="NC_002928.3"/>
</dbReference>
<dbReference type="SMR" id="Q7W7F7"/>
<dbReference type="GeneID" id="93204350"/>
<dbReference type="KEGG" id="bpa:BPP2563"/>
<dbReference type="HOGENOM" id="CLU_038816_2_0_4"/>
<dbReference type="UniPathway" id="UPA00359">
    <property type="reaction ID" value="UER00482"/>
</dbReference>
<dbReference type="Proteomes" id="UP000001421">
    <property type="component" value="Chromosome"/>
</dbReference>
<dbReference type="GO" id="GO:0005886">
    <property type="term" value="C:plasma membrane"/>
    <property type="evidence" value="ECO:0007669"/>
    <property type="project" value="TreeGrafter"/>
</dbReference>
<dbReference type="GO" id="GO:0005524">
    <property type="term" value="F:ATP binding"/>
    <property type="evidence" value="ECO:0007669"/>
    <property type="project" value="UniProtKB-UniRule"/>
</dbReference>
<dbReference type="GO" id="GO:0009029">
    <property type="term" value="F:tetraacyldisaccharide 4'-kinase activity"/>
    <property type="evidence" value="ECO:0007669"/>
    <property type="project" value="UniProtKB-UniRule"/>
</dbReference>
<dbReference type="GO" id="GO:0009245">
    <property type="term" value="P:lipid A biosynthetic process"/>
    <property type="evidence" value="ECO:0007669"/>
    <property type="project" value="UniProtKB-UniRule"/>
</dbReference>
<dbReference type="GO" id="GO:0009244">
    <property type="term" value="P:lipopolysaccharide core region biosynthetic process"/>
    <property type="evidence" value="ECO:0007669"/>
    <property type="project" value="TreeGrafter"/>
</dbReference>
<dbReference type="HAMAP" id="MF_00409">
    <property type="entry name" value="LpxK"/>
    <property type="match status" value="1"/>
</dbReference>
<dbReference type="InterPro" id="IPR003758">
    <property type="entry name" value="LpxK"/>
</dbReference>
<dbReference type="InterPro" id="IPR027417">
    <property type="entry name" value="P-loop_NTPase"/>
</dbReference>
<dbReference type="NCBIfam" id="TIGR00682">
    <property type="entry name" value="lpxK"/>
    <property type="match status" value="1"/>
</dbReference>
<dbReference type="PANTHER" id="PTHR42724">
    <property type="entry name" value="TETRAACYLDISACCHARIDE 4'-KINASE"/>
    <property type="match status" value="1"/>
</dbReference>
<dbReference type="PANTHER" id="PTHR42724:SF1">
    <property type="entry name" value="TETRAACYLDISACCHARIDE 4'-KINASE, MITOCHONDRIAL-RELATED"/>
    <property type="match status" value="1"/>
</dbReference>
<dbReference type="Pfam" id="PF02606">
    <property type="entry name" value="LpxK"/>
    <property type="match status" value="1"/>
</dbReference>
<dbReference type="SUPFAM" id="SSF52540">
    <property type="entry name" value="P-loop containing nucleoside triphosphate hydrolases"/>
    <property type="match status" value="1"/>
</dbReference>
<gene>
    <name evidence="1" type="primary">lpxK</name>
    <name type="ordered locus">BPP2563</name>
</gene>
<evidence type="ECO:0000255" key="1">
    <source>
        <dbReference type="HAMAP-Rule" id="MF_00409"/>
    </source>
</evidence>
<protein>
    <recommendedName>
        <fullName evidence="1">Tetraacyldisaccharide 4'-kinase</fullName>
        <ecNumber evidence="1">2.7.1.130</ecNumber>
    </recommendedName>
    <alternativeName>
        <fullName evidence="1">Lipid A 4'-kinase</fullName>
    </alternativeName>
</protein>
<name>LPXK_BORPA</name>
<feature type="chain" id="PRO_0000190911" description="Tetraacyldisaccharide 4'-kinase">
    <location>
        <begin position="1"/>
        <end position="347"/>
    </location>
</feature>
<feature type="binding site" evidence="1">
    <location>
        <begin position="64"/>
        <end position="71"/>
    </location>
    <ligand>
        <name>ATP</name>
        <dbReference type="ChEBI" id="CHEBI:30616"/>
    </ligand>
</feature>
<sequence length="347" mass="36708">MNAPRCLRRLLERQWRQGGWLSTLLRPLAALTGLVVARKRNAYLTGARAAWRAPVPVVVVGNIYVGGTGKTPVVIEVVRQLQARGWTPGVVSRGYGVDVGAAPRVGQGQLAAADYGDEPALIARATGAAIAVHPHRPRAVQALLRAHPGVDVVVSDDGLQHLALARDVEIVVQDERGVGNGRLLPAGPLREPAQRLADVDAIVTNAGRPRAAAAPAAGAPRQLAMWLEPTHAQRVTDGATRTLADLAALPPARLAAAAGIGNPARFFQTLEQAGIRPAHTLALPDHYAYAQSPFTALDADLILVTAKDAIKCAALDDPRLWAVQVGTRLSDPDFGDWLSATLRARQP</sequence>
<organism>
    <name type="scientific">Bordetella parapertussis (strain 12822 / ATCC BAA-587 / NCTC 13253)</name>
    <dbReference type="NCBI Taxonomy" id="257311"/>
    <lineage>
        <taxon>Bacteria</taxon>
        <taxon>Pseudomonadati</taxon>
        <taxon>Pseudomonadota</taxon>
        <taxon>Betaproteobacteria</taxon>
        <taxon>Burkholderiales</taxon>
        <taxon>Alcaligenaceae</taxon>
        <taxon>Bordetella</taxon>
    </lineage>
</organism>
<reference key="1">
    <citation type="journal article" date="2003" name="Nat. Genet.">
        <title>Comparative analysis of the genome sequences of Bordetella pertussis, Bordetella parapertussis and Bordetella bronchiseptica.</title>
        <authorList>
            <person name="Parkhill J."/>
            <person name="Sebaihia M."/>
            <person name="Preston A."/>
            <person name="Murphy L.D."/>
            <person name="Thomson N.R."/>
            <person name="Harris D.E."/>
            <person name="Holden M.T.G."/>
            <person name="Churcher C.M."/>
            <person name="Bentley S.D."/>
            <person name="Mungall K.L."/>
            <person name="Cerdeno-Tarraga A.-M."/>
            <person name="Temple L."/>
            <person name="James K.D."/>
            <person name="Harris B."/>
            <person name="Quail M.A."/>
            <person name="Achtman M."/>
            <person name="Atkin R."/>
            <person name="Baker S."/>
            <person name="Basham D."/>
            <person name="Bason N."/>
            <person name="Cherevach I."/>
            <person name="Chillingworth T."/>
            <person name="Collins M."/>
            <person name="Cronin A."/>
            <person name="Davis P."/>
            <person name="Doggett J."/>
            <person name="Feltwell T."/>
            <person name="Goble A."/>
            <person name="Hamlin N."/>
            <person name="Hauser H."/>
            <person name="Holroyd S."/>
            <person name="Jagels K."/>
            <person name="Leather S."/>
            <person name="Moule S."/>
            <person name="Norberczak H."/>
            <person name="O'Neil S."/>
            <person name="Ormond D."/>
            <person name="Price C."/>
            <person name="Rabbinowitsch E."/>
            <person name="Rutter S."/>
            <person name="Sanders M."/>
            <person name="Saunders D."/>
            <person name="Seeger K."/>
            <person name="Sharp S."/>
            <person name="Simmonds M."/>
            <person name="Skelton J."/>
            <person name="Squares R."/>
            <person name="Squares S."/>
            <person name="Stevens K."/>
            <person name="Unwin L."/>
            <person name="Whitehead S."/>
            <person name="Barrell B.G."/>
            <person name="Maskell D.J."/>
        </authorList>
    </citation>
    <scope>NUCLEOTIDE SEQUENCE [LARGE SCALE GENOMIC DNA]</scope>
    <source>
        <strain>12822 / ATCC BAA-587 / NCTC 13253</strain>
    </source>
</reference>
<proteinExistence type="inferred from homology"/>
<comment type="function">
    <text evidence="1">Transfers the gamma-phosphate of ATP to the 4'-position of a tetraacyldisaccharide 1-phosphate intermediate (termed DS-1-P) to form tetraacyldisaccharide 1,4'-bis-phosphate (lipid IVA).</text>
</comment>
<comment type="catalytic activity">
    <reaction evidence="1">
        <text>a lipid A disaccharide + ATP = a lipid IVA + ADP + H(+)</text>
        <dbReference type="Rhea" id="RHEA:67840"/>
        <dbReference type="ChEBI" id="CHEBI:15378"/>
        <dbReference type="ChEBI" id="CHEBI:30616"/>
        <dbReference type="ChEBI" id="CHEBI:176343"/>
        <dbReference type="ChEBI" id="CHEBI:176425"/>
        <dbReference type="ChEBI" id="CHEBI:456216"/>
        <dbReference type="EC" id="2.7.1.130"/>
    </reaction>
</comment>
<comment type="pathway">
    <text evidence="1">Glycolipid biosynthesis; lipid IV(A) biosynthesis; lipid IV(A) from (3R)-3-hydroxytetradecanoyl-[acyl-carrier-protein] and UDP-N-acetyl-alpha-D-glucosamine: step 6/6.</text>
</comment>
<comment type="similarity">
    <text evidence="1">Belongs to the LpxK family.</text>
</comment>
<keyword id="KW-0067">ATP-binding</keyword>
<keyword id="KW-0418">Kinase</keyword>
<keyword id="KW-0441">Lipid A biosynthesis</keyword>
<keyword id="KW-0444">Lipid biosynthesis</keyword>
<keyword id="KW-0443">Lipid metabolism</keyword>
<keyword id="KW-0547">Nucleotide-binding</keyword>
<keyword id="KW-0808">Transferase</keyword>
<accession>Q7W7F7</accession>